<dbReference type="EMBL" id="CP000020">
    <property type="protein sequence ID" value="AAW85520.1"/>
    <property type="molecule type" value="Genomic_DNA"/>
</dbReference>
<dbReference type="RefSeq" id="WP_011261657.1">
    <property type="nucleotide sequence ID" value="NC_006840.2"/>
</dbReference>
<dbReference type="RefSeq" id="YP_204408.1">
    <property type="nucleotide sequence ID" value="NC_006840.2"/>
</dbReference>
<dbReference type="STRING" id="312309.VF_1025"/>
<dbReference type="EnsemblBacteria" id="AAW85520">
    <property type="protein sequence ID" value="AAW85520"/>
    <property type="gene ID" value="VF_1025"/>
</dbReference>
<dbReference type="GeneID" id="54163697"/>
<dbReference type="KEGG" id="vfi:VF_1025"/>
<dbReference type="PATRIC" id="fig|312309.11.peg.1025"/>
<dbReference type="eggNOG" id="COG2917">
    <property type="taxonomic scope" value="Bacteria"/>
</dbReference>
<dbReference type="HOGENOM" id="CLU_089554_2_0_6"/>
<dbReference type="OrthoDB" id="9788219at2"/>
<dbReference type="Proteomes" id="UP000000537">
    <property type="component" value="Chromosome I"/>
</dbReference>
<dbReference type="GO" id="GO:0005886">
    <property type="term" value="C:plasma membrane"/>
    <property type="evidence" value="ECO:0007669"/>
    <property type="project" value="UniProtKB-SubCell"/>
</dbReference>
<dbReference type="HAMAP" id="MF_00189">
    <property type="entry name" value="YciB"/>
    <property type="match status" value="1"/>
</dbReference>
<dbReference type="InterPro" id="IPR006008">
    <property type="entry name" value="YciB"/>
</dbReference>
<dbReference type="NCBIfam" id="TIGR00997">
    <property type="entry name" value="ispZ"/>
    <property type="match status" value="1"/>
</dbReference>
<dbReference type="NCBIfam" id="NF001324">
    <property type="entry name" value="PRK00259.1-2"/>
    <property type="match status" value="1"/>
</dbReference>
<dbReference type="NCBIfam" id="NF001325">
    <property type="entry name" value="PRK00259.1-3"/>
    <property type="match status" value="1"/>
</dbReference>
<dbReference type="PANTHER" id="PTHR36917:SF1">
    <property type="entry name" value="INNER MEMBRANE-SPANNING PROTEIN YCIB"/>
    <property type="match status" value="1"/>
</dbReference>
<dbReference type="PANTHER" id="PTHR36917">
    <property type="entry name" value="INTRACELLULAR SEPTATION PROTEIN A-RELATED"/>
    <property type="match status" value="1"/>
</dbReference>
<dbReference type="Pfam" id="PF04279">
    <property type="entry name" value="IspA"/>
    <property type="match status" value="1"/>
</dbReference>
<protein>
    <recommendedName>
        <fullName evidence="1">Inner membrane-spanning protein YciB</fullName>
    </recommendedName>
</protein>
<name>YCIB_ALIF1</name>
<keyword id="KW-0997">Cell inner membrane</keyword>
<keyword id="KW-1003">Cell membrane</keyword>
<keyword id="KW-0472">Membrane</keyword>
<keyword id="KW-1185">Reference proteome</keyword>
<keyword id="KW-0812">Transmembrane</keyword>
<keyword id="KW-1133">Transmembrane helix</keyword>
<comment type="function">
    <text evidence="1">Plays a role in cell envelope biogenesis, maintenance of cell envelope integrity and membrane homeostasis.</text>
</comment>
<comment type="subcellular location">
    <subcellularLocation>
        <location evidence="1">Cell inner membrane</location>
        <topology evidence="1">Multi-pass membrane protein</topology>
    </subcellularLocation>
</comment>
<comment type="similarity">
    <text evidence="1">Belongs to the YciB family.</text>
</comment>
<evidence type="ECO:0000255" key="1">
    <source>
        <dbReference type="HAMAP-Rule" id="MF_00189"/>
    </source>
</evidence>
<gene>
    <name evidence="1" type="primary">yciB</name>
    <name type="ordered locus">VF_1025</name>
</gene>
<sequence>MKQILDFIPLIIFFALYKMYDIYTATGALIIATAIQLVVTYALYKKVEKMQLITFIMVTVFGGMTIFLHDDNFIKWKVTIVYCVFAAGLIIAHILGKPVIKGMLGKEVTLPDDKWTKINHAWVLFFTVCAIANLYVAFEMPLDVWVNFKVFGLLGLTFLYTLFTGMYVYKHMPKEKKEEQE</sequence>
<reference key="1">
    <citation type="journal article" date="2005" name="Proc. Natl. Acad. Sci. U.S.A.">
        <title>Complete genome sequence of Vibrio fischeri: a symbiotic bacterium with pathogenic congeners.</title>
        <authorList>
            <person name="Ruby E.G."/>
            <person name="Urbanowski M."/>
            <person name="Campbell J."/>
            <person name="Dunn A."/>
            <person name="Faini M."/>
            <person name="Gunsalus R."/>
            <person name="Lostroh P."/>
            <person name="Lupp C."/>
            <person name="McCann J."/>
            <person name="Millikan D."/>
            <person name="Schaefer A."/>
            <person name="Stabb E."/>
            <person name="Stevens A."/>
            <person name="Visick K."/>
            <person name="Whistler C."/>
            <person name="Greenberg E.P."/>
        </authorList>
    </citation>
    <scope>NUCLEOTIDE SEQUENCE [LARGE SCALE GENOMIC DNA]</scope>
    <source>
        <strain>ATCC 700601 / ES114</strain>
    </source>
</reference>
<proteinExistence type="inferred from homology"/>
<organism>
    <name type="scientific">Aliivibrio fischeri (strain ATCC 700601 / ES114)</name>
    <name type="common">Vibrio fischeri</name>
    <dbReference type="NCBI Taxonomy" id="312309"/>
    <lineage>
        <taxon>Bacteria</taxon>
        <taxon>Pseudomonadati</taxon>
        <taxon>Pseudomonadota</taxon>
        <taxon>Gammaproteobacteria</taxon>
        <taxon>Vibrionales</taxon>
        <taxon>Vibrionaceae</taxon>
        <taxon>Aliivibrio</taxon>
    </lineage>
</organism>
<feature type="chain" id="PRO_1000021072" description="Inner membrane-spanning protein YciB">
    <location>
        <begin position="1"/>
        <end position="181"/>
    </location>
</feature>
<feature type="transmembrane region" description="Helical" evidence="1">
    <location>
        <begin position="22"/>
        <end position="42"/>
    </location>
</feature>
<feature type="transmembrane region" description="Helical" evidence="1">
    <location>
        <begin position="50"/>
        <end position="70"/>
    </location>
</feature>
<feature type="transmembrane region" description="Helical" evidence="1">
    <location>
        <begin position="80"/>
        <end position="100"/>
    </location>
</feature>
<feature type="transmembrane region" description="Helical" evidence="1">
    <location>
        <begin position="122"/>
        <end position="142"/>
    </location>
</feature>
<feature type="transmembrane region" description="Helical" evidence="1">
    <location>
        <begin position="148"/>
        <end position="168"/>
    </location>
</feature>
<accession>Q5E626</accession>